<accession>Q7LZG3</accession>
<reference key="1">
    <citation type="journal article" date="1995" name="Biochim. Biophys. Acta">
        <title>Characterisation of a purified phospholipase A2 from the venom of the Papuan black snake (Pseudechis papuanus).</title>
        <authorList>
            <person name="Laing G.D."/>
            <person name="Kamiguti A.S."/>
            <person name="Wilkinson M.C."/>
            <person name="Lowe G.M."/>
            <person name="Theakston R.D.G."/>
        </authorList>
    </citation>
    <scope>PROTEIN SEQUENCE</scope>
    <scope>FUNCTION</scope>
    <scope>SUBCELLULAR LOCATION</scope>
    <scope>TISSUE SPECIFICITY</scope>
    <scope>TOXIC DOSE</scope>
    <source>
        <tissue>Venom</tissue>
    </source>
</reference>
<proteinExistence type="evidence at protein level"/>
<evidence type="ECO:0000250" key="1"/>
<evidence type="ECO:0000269" key="2">
    <source>
    </source>
</evidence>
<evidence type="ECO:0000305" key="3"/>
<name>PA2_PSEPP</name>
<comment type="function">
    <text evidence="2">Snake venom phospholipase A2 (PLA2) that strongly inhibits platelet aggregation and has a strong anticoagulant activity. PLA2 catalyzes the calcium-dependent hydrolysis of the 2-acyl groups in 3-sn-phosphoglycerides.</text>
</comment>
<comment type="catalytic activity">
    <reaction>
        <text>a 1,2-diacyl-sn-glycero-3-phosphocholine + H2O = a 1-acyl-sn-glycero-3-phosphocholine + a fatty acid + H(+)</text>
        <dbReference type="Rhea" id="RHEA:15801"/>
        <dbReference type="ChEBI" id="CHEBI:15377"/>
        <dbReference type="ChEBI" id="CHEBI:15378"/>
        <dbReference type="ChEBI" id="CHEBI:28868"/>
        <dbReference type="ChEBI" id="CHEBI:57643"/>
        <dbReference type="ChEBI" id="CHEBI:58168"/>
        <dbReference type="EC" id="3.1.1.4"/>
    </reaction>
</comment>
<comment type="cofactor">
    <cofactor evidence="1">
        <name>Ca(2+)</name>
        <dbReference type="ChEBI" id="CHEBI:29108"/>
    </cofactor>
    <text evidence="1">Binds 1 Ca(2+) ion.</text>
</comment>
<comment type="subcellular location">
    <subcellularLocation>
        <location evidence="2">Secreted</location>
    </subcellularLocation>
</comment>
<comment type="tissue specificity">
    <text evidence="2">Expressed by the venom gland.</text>
</comment>
<comment type="PTM">
    <text evidence="1">Contains 7 disulfide bonds.</text>
</comment>
<comment type="toxic dose">
    <text evidence="2">LD(50) is 722 ug/kg by intravenous injection into mice.</text>
</comment>
<comment type="similarity">
    <text evidence="3">Belongs to the phospholipase A2 family. Group I subfamily. D49 sub-subfamily.</text>
</comment>
<sequence length="34" mass="4020">NLIQFSNMIQLDRCCETHDNEAEKKGCYPKLTLY</sequence>
<organism>
    <name type="scientific">Pseudechis papuanus</name>
    <name type="common">Papuan black snake</name>
    <dbReference type="NCBI Taxonomy" id="61265"/>
    <lineage>
        <taxon>Eukaryota</taxon>
        <taxon>Metazoa</taxon>
        <taxon>Chordata</taxon>
        <taxon>Craniata</taxon>
        <taxon>Vertebrata</taxon>
        <taxon>Euteleostomi</taxon>
        <taxon>Lepidosauria</taxon>
        <taxon>Squamata</taxon>
        <taxon>Bifurcata</taxon>
        <taxon>Unidentata</taxon>
        <taxon>Episquamata</taxon>
        <taxon>Toxicofera</taxon>
        <taxon>Serpentes</taxon>
        <taxon>Colubroidea</taxon>
        <taxon>Elapidae</taxon>
        <taxon>Hydrophiinae</taxon>
        <taxon>Pseudechis</taxon>
    </lineage>
</organism>
<protein>
    <recommendedName>
        <fullName>Phospholipase A2</fullName>
        <shortName>svPLA2</shortName>
        <ecNumber>3.1.1.4</ecNumber>
    </recommendedName>
    <alternativeName>
        <fullName>Phosphatidylcholine 2-acylhydrolase</fullName>
    </alternativeName>
</protein>
<feature type="chain" id="PRO_0000408517" description="Phospholipase A2">
    <location>
        <begin position="1"/>
        <end position="34" status="greater than"/>
    </location>
</feature>
<feature type="active site" evidence="1">
    <location>
        <position position="18"/>
    </location>
</feature>
<feature type="binding site" evidence="1">
    <location>
        <position position="19"/>
    </location>
    <ligand>
        <name>Ca(2+)</name>
        <dbReference type="ChEBI" id="CHEBI:29108"/>
    </ligand>
</feature>
<feature type="non-consecutive residues" evidence="3">
    <location>
        <begin position="10"/>
        <end position="11"/>
    </location>
</feature>
<feature type="non-consecutive residues" evidence="3">
    <location>
        <begin position="20"/>
        <end position="21"/>
    </location>
</feature>
<feature type="non-terminal residue">
    <location>
        <position position="34"/>
    </location>
</feature>
<dbReference type="EC" id="3.1.1.4"/>
<dbReference type="PIR" id="S57282">
    <property type="entry name" value="S57282"/>
</dbReference>
<dbReference type="GO" id="GO:0005576">
    <property type="term" value="C:extracellular region"/>
    <property type="evidence" value="ECO:0007669"/>
    <property type="project" value="UniProtKB-SubCell"/>
</dbReference>
<dbReference type="GO" id="GO:0046872">
    <property type="term" value="F:metal ion binding"/>
    <property type="evidence" value="ECO:0007669"/>
    <property type="project" value="UniProtKB-KW"/>
</dbReference>
<dbReference type="GO" id="GO:0004623">
    <property type="term" value="F:phospholipase A2 activity"/>
    <property type="evidence" value="ECO:0007669"/>
    <property type="project" value="UniProtKB-EC"/>
</dbReference>
<dbReference type="GO" id="GO:0090729">
    <property type="term" value="F:toxin activity"/>
    <property type="evidence" value="ECO:0007669"/>
    <property type="project" value="UniProtKB-KW"/>
</dbReference>
<dbReference type="GO" id="GO:0050482">
    <property type="term" value="P:arachidonate secretion"/>
    <property type="evidence" value="ECO:0007669"/>
    <property type="project" value="InterPro"/>
</dbReference>
<dbReference type="GO" id="GO:0016042">
    <property type="term" value="P:lipid catabolic process"/>
    <property type="evidence" value="ECO:0007669"/>
    <property type="project" value="UniProtKB-KW"/>
</dbReference>
<dbReference type="GO" id="GO:0006644">
    <property type="term" value="P:phospholipid metabolic process"/>
    <property type="evidence" value="ECO:0007669"/>
    <property type="project" value="InterPro"/>
</dbReference>
<dbReference type="InterPro" id="IPR036444">
    <property type="entry name" value="PLipase_A2_dom_sf"/>
</dbReference>
<dbReference type="SUPFAM" id="SSF48619">
    <property type="entry name" value="Phospholipase A2, PLA2"/>
    <property type="match status" value="1"/>
</dbReference>
<keyword id="KW-1203">Blood coagulation cascade inhibiting toxin</keyword>
<keyword id="KW-0106">Calcium</keyword>
<keyword id="KW-0903">Direct protein sequencing</keyword>
<keyword id="KW-1015">Disulfide bond</keyword>
<keyword id="KW-1199">Hemostasis impairing toxin</keyword>
<keyword id="KW-0378">Hydrolase</keyword>
<keyword id="KW-0442">Lipid degradation</keyword>
<keyword id="KW-0443">Lipid metabolism</keyword>
<keyword id="KW-0479">Metal-binding</keyword>
<keyword id="KW-1201">Platelet aggregation inhibiting toxin</keyword>
<keyword id="KW-0964">Secreted</keyword>
<keyword id="KW-0800">Toxin</keyword>